<name>RS10_SHEPC</name>
<sequence>MQNQRIRIRLKGFDHRLIDQSTAEIVETAKRTGAQVRGPIPLPTRKERYTILISPHVNKDARDQYELRTHKRLVDIVEPTEKTVDALMRLDLAAGVDVQISLG</sequence>
<keyword id="KW-0687">Ribonucleoprotein</keyword>
<keyword id="KW-0689">Ribosomal protein</keyword>
<dbReference type="EMBL" id="CP000681">
    <property type="protein sequence ID" value="ABP77467.1"/>
    <property type="molecule type" value="Genomic_DNA"/>
</dbReference>
<dbReference type="SMR" id="A4YBY4"/>
<dbReference type="STRING" id="319224.Sputcn32_3760"/>
<dbReference type="KEGG" id="spc:Sputcn32_3760"/>
<dbReference type="eggNOG" id="COG0051">
    <property type="taxonomic scope" value="Bacteria"/>
</dbReference>
<dbReference type="HOGENOM" id="CLU_122625_1_3_6"/>
<dbReference type="GO" id="GO:1990904">
    <property type="term" value="C:ribonucleoprotein complex"/>
    <property type="evidence" value="ECO:0007669"/>
    <property type="project" value="UniProtKB-KW"/>
</dbReference>
<dbReference type="GO" id="GO:0005840">
    <property type="term" value="C:ribosome"/>
    <property type="evidence" value="ECO:0007669"/>
    <property type="project" value="UniProtKB-KW"/>
</dbReference>
<dbReference type="GO" id="GO:0003735">
    <property type="term" value="F:structural constituent of ribosome"/>
    <property type="evidence" value="ECO:0007669"/>
    <property type="project" value="InterPro"/>
</dbReference>
<dbReference type="GO" id="GO:0000049">
    <property type="term" value="F:tRNA binding"/>
    <property type="evidence" value="ECO:0007669"/>
    <property type="project" value="UniProtKB-UniRule"/>
</dbReference>
<dbReference type="GO" id="GO:0006412">
    <property type="term" value="P:translation"/>
    <property type="evidence" value="ECO:0007669"/>
    <property type="project" value="UniProtKB-UniRule"/>
</dbReference>
<dbReference type="FunFam" id="3.30.70.600:FF:000001">
    <property type="entry name" value="30S ribosomal protein S10"/>
    <property type="match status" value="1"/>
</dbReference>
<dbReference type="Gene3D" id="3.30.70.600">
    <property type="entry name" value="Ribosomal protein S10 domain"/>
    <property type="match status" value="1"/>
</dbReference>
<dbReference type="HAMAP" id="MF_00508">
    <property type="entry name" value="Ribosomal_uS10"/>
    <property type="match status" value="1"/>
</dbReference>
<dbReference type="InterPro" id="IPR001848">
    <property type="entry name" value="Ribosomal_uS10"/>
</dbReference>
<dbReference type="InterPro" id="IPR018268">
    <property type="entry name" value="Ribosomal_uS10_CS"/>
</dbReference>
<dbReference type="InterPro" id="IPR027486">
    <property type="entry name" value="Ribosomal_uS10_dom"/>
</dbReference>
<dbReference type="InterPro" id="IPR036838">
    <property type="entry name" value="Ribosomal_uS10_dom_sf"/>
</dbReference>
<dbReference type="NCBIfam" id="NF001861">
    <property type="entry name" value="PRK00596.1"/>
    <property type="match status" value="1"/>
</dbReference>
<dbReference type="NCBIfam" id="TIGR01049">
    <property type="entry name" value="rpsJ_bact"/>
    <property type="match status" value="1"/>
</dbReference>
<dbReference type="PANTHER" id="PTHR11700">
    <property type="entry name" value="30S RIBOSOMAL PROTEIN S10 FAMILY MEMBER"/>
    <property type="match status" value="1"/>
</dbReference>
<dbReference type="Pfam" id="PF00338">
    <property type="entry name" value="Ribosomal_S10"/>
    <property type="match status" value="1"/>
</dbReference>
<dbReference type="PRINTS" id="PR00971">
    <property type="entry name" value="RIBOSOMALS10"/>
</dbReference>
<dbReference type="SMART" id="SM01403">
    <property type="entry name" value="Ribosomal_S10"/>
    <property type="match status" value="1"/>
</dbReference>
<dbReference type="SUPFAM" id="SSF54999">
    <property type="entry name" value="Ribosomal protein S10"/>
    <property type="match status" value="1"/>
</dbReference>
<dbReference type="PROSITE" id="PS00361">
    <property type="entry name" value="RIBOSOMAL_S10"/>
    <property type="match status" value="1"/>
</dbReference>
<reference key="1">
    <citation type="submission" date="2007-04" db="EMBL/GenBank/DDBJ databases">
        <title>Complete sequence of Shewanella putrefaciens CN-32.</title>
        <authorList>
            <consortium name="US DOE Joint Genome Institute"/>
            <person name="Copeland A."/>
            <person name="Lucas S."/>
            <person name="Lapidus A."/>
            <person name="Barry K."/>
            <person name="Detter J.C."/>
            <person name="Glavina del Rio T."/>
            <person name="Hammon N."/>
            <person name="Israni S."/>
            <person name="Dalin E."/>
            <person name="Tice H."/>
            <person name="Pitluck S."/>
            <person name="Chain P."/>
            <person name="Malfatti S."/>
            <person name="Shin M."/>
            <person name="Vergez L."/>
            <person name="Schmutz J."/>
            <person name="Larimer F."/>
            <person name="Land M."/>
            <person name="Hauser L."/>
            <person name="Kyrpides N."/>
            <person name="Mikhailova N."/>
            <person name="Romine M.F."/>
            <person name="Fredrickson J."/>
            <person name="Tiedje J."/>
            <person name="Richardson P."/>
        </authorList>
    </citation>
    <scope>NUCLEOTIDE SEQUENCE [LARGE SCALE GENOMIC DNA]</scope>
    <source>
        <strain>CN-32 / ATCC BAA-453</strain>
    </source>
</reference>
<evidence type="ECO:0000255" key="1">
    <source>
        <dbReference type="HAMAP-Rule" id="MF_00508"/>
    </source>
</evidence>
<evidence type="ECO:0000305" key="2"/>
<protein>
    <recommendedName>
        <fullName evidence="1">Small ribosomal subunit protein uS10</fullName>
    </recommendedName>
    <alternativeName>
        <fullName evidence="2">30S ribosomal protein S10</fullName>
    </alternativeName>
</protein>
<accession>A4YBY4</accession>
<proteinExistence type="inferred from homology"/>
<organism>
    <name type="scientific">Shewanella putrefaciens (strain CN-32 / ATCC BAA-453)</name>
    <dbReference type="NCBI Taxonomy" id="319224"/>
    <lineage>
        <taxon>Bacteria</taxon>
        <taxon>Pseudomonadati</taxon>
        <taxon>Pseudomonadota</taxon>
        <taxon>Gammaproteobacteria</taxon>
        <taxon>Alteromonadales</taxon>
        <taxon>Shewanellaceae</taxon>
        <taxon>Shewanella</taxon>
    </lineage>
</organism>
<feature type="chain" id="PRO_1000015112" description="Small ribosomal subunit protein uS10">
    <location>
        <begin position="1"/>
        <end position="103"/>
    </location>
</feature>
<gene>
    <name evidence="1" type="primary">rpsJ</name>
    <name type="ordered locus">Sputcn32_3760</name>
</gene>
<comment type="function">
    <text evidence="1">Involved in the binding of tRNA to the ribosomes.</text>
</comment>
<comment type="subunit">
    <text evidence="1">Part of the 30S ribosomal subunit.</text>
</comment>
<comment type="similarity">
    <text evidence="1">Belongs to the universal ribosomal protein uS10 family.</text>
</comment>